<reference key="1">
    <citation type="journal article" date="1996" name="Nucleic Acids Res.">
        <title>Sequence analysis of 56 kb from the genome of the bacterium Mycoplasma pneumoniae comprising the dnaA region, the atp operon and a cluster of ribosomal protein genes.</title>
        <authorList>
            <person name="Hilbert H."/>
            <person name="Himmelreich R."/>
            <person name="Plagens H."/>
            <person name="Herrmann R."/>
        </authorList>
    </citation>
    <scope>NUCLEOTIDE SEQUENCE [GENOMIC DNA]</scope>
    <source>
        <strain>ATCC 29342 / M129 / Subtype 1</strain>
    </source>
</reference>
<reference key="2">
    <citation type="journal article" date="1996" name="Nucleic Acids Res.">
        <title>Complete sequence analysis of the genome of the bacterium Mycoplasma pneumoniae.</title>
        <authorList>
            <person name="Himmelreich R."/>
            <person name="Hilbert H."/>
            <person name="Plagens H."/>
            <person name="Pirkl E."/>
            <person name="Li B.-C."/>
            <person name="Herrmann R."/>
        </authorList>
    </citation>
    <scope>NUCLEOTIDE SEQUENCE [LARGE SCALE GENOMIC DNA]</scope>
    <source>
        <strain>ATCC 29342 / M129 / Subtype 1</strain>
    </source>
</reference>
<dbReference type="EMBL" id="U34795">
    <property type="protein sequence ID" value="AAC43693.1"/>
    <property type="molecule type" value="Genomic_DNA"/>
</dbReference>
<dbReference type="EMBL" id="U00089">
    <property type="protein sequence ID" value="AAB96291.1"/>
    <property type="molecule type" value="Genomic_DNA"/>
</dbReference>
<dbReference type="PIR" id="S62820">
    <property type="entry name" value="S62820"/>
</dbReference>
<dbReference type="RefSeq" id="NP_109876.1">
    <property type="nucleotide sequence ID" value="NC_000912.1"/>
</dbReference>
<dbReference type="RefSeq" id="WP_010874545.1">
    <property type="nucleotide sequence ID" value="NZ_OU342337.1"/>
</dbReference>
<dbReference type="PDB" id="7OOD">
    <property type="method" value="EM"/>
    <property type="resolution" value="3.40 A"/>
    <property type="chains" value="2=1-37"/>
</dbReference>
<dbReference type="PDB" id="7P6Z">
    <property type="method" value="EM"/>
    <property type="resolution" value="3.50 A"/>
    <property type="chains" value="2=1-37"/>
</dbReference>
<dbReference type="PDB" id="7PAH">
    <property type="method" value="EM"/>
    <property type="resolution" value="9.50 A"/>
    <property type="chains" value="2=1-37"/>
</dbReference>
<dbReference type="PDB" id="7PAI">
    <property type="method" value="EM"/>
    <property type="resolution" value="6.70 A"/>
    <property type="chains" value="2=1-37"/>
</dbReference>
<dbReference type="PDB" id="7PAJ">
    <property type="method" value="EM"/>
    <property type="resolution" value="7.30 A"/>
    <property type="chains" value="2=1-37"/>
</dbReference>
<dbReference type="PDB" id="7PAK">
    <property type="method" value="EM"/>
    <property type="resolution" value="5.30 A"/>
    <property type="chains" value="2=1-37"/>
</dbReference>
<dbReference type="PDB" id="7PAL">
    <property type="method" value="EM"/>
    <property type="resolution" value="4.70 A"/>
    <property type="chains" value="2=1-37"/>
</dbReference>
<dbReference type="PDB" id="7PAM">
    <property type="method" value="EM"/>
    <property type="resolution" value="6.80 A"/>
    <property type="chains" value="2=1-37"/>
</dbReference>
<dbReference type="PDB" id="7PAN">
    <property type="method" value="EM"/>
    <property type="resolution" value="9.70 A"/>
    <property type="chains" value="2=1-37"/>
</dbReference>
<dbReference type="PDB" id="7PAO">
    <property type="method" value="EM"/>
    <property type="resolution" value="7.00 A"/>
    <property type="chains" value="2=1-37"/>
</dbReference>
<dbReference type="PDB" id="7PAQ">
    <property type="method" value="EM"/>
    <property type="resolution" value="8.90 A"/>
    <property type="chains" value="2=1-37"/>
</dbReference>
<dbReference type="PDB" id="7PAR">
    <property type="method" value="EM"/>
    <property type="resolution" value="8.20 A"/>
    <property type="chains" value="2=1-37"/>
</dbReference>
<dbReference type="PDB" id="7PAS">
    <property type="method" value="EM"/>
    <property type="resolution" value="16.00 A"/>
    <property type="chains" value="2=1-37"/>
</dbReference>
<dbReference type="PDB" id="7PAT">
    <property type="method" value="EM"/>
    <property type="resolution" value="9.20 A"/>
    <property type="chains" value="2=1-37"/>
</dbReference>
<dbReference type="PDB" id="7PAU">
    <property type="method" value="EM"/>
    <property type="resolution" value="8.30 A"/>
    <property type="chains" value="2=1-37"/>
</dbReference>
<dbReference type="PDB" id="7PH9">
    <property type="method" value="EM"/>
    <property type="resolution" value="8.70 A"/>
    <property type="chains" value="2=1-37"/>
</dbReference>
<dbReference type="PDB" id="7PHA">
    <property type="method" value="EM"/>
    <property type="resolution" value="8.50 A"/>
    <property type="chains" value="2=1-37"/>
</dbReference>
<dbReference type="PDB" id="7PHB">
    <property type="method" value="EM"/>
    <property type="resolution" value="4.90 A"/>
    <property type="chains" value="2=1-37"/>
</dbReference>
<dbReference type="PDB" id="7PHC">
    <property type="method" value="EM"/>
    <property type="resolution" value="9.90 A"/>
    <property type="chains" value="2=1-37"/>
</dbReference>
<dbReference type="PDB" id="7PI8">
    <property type="method" value="EM"/>
    <property type="resolution" value="8.90 A"/>
    <property type="chains" value="2=1-37"/>
</dbReference>
<dbReference type="PDB" id="7PI9">
    <property type="method" value="EM"/>
    <property type="resolution" value="6.30 A"/>
    <property type="chains" value="2=1-37"/>
</dbReference>
<dbReference type="PDB" id="7PIA">
    <property type="method" value="EM"/>
    <property type="resolution" value="13.60 A"/>
    <property type="chains" value="2=1-37"/>
</dbReference>
<dbReference type="PDB" id="7PIB">
    <property type="method" value="EM"/>
    <property type="resolution" value="4.70 A"/>
    <property type="chains" value="2=1-37"/>
</dbReference>
<dbReference type="PDB" id="7PIC">
    <property type="method" value="EM"/>
    <property type="resolution" value="9.10 A"/>
    <property type="chains" value="2=1-37"/>
</dbReference>
<dbReference type="PDB" id="7PIO">
    <property type="method" value="EM"/>
    <property type="resolution" value="9.50 A"/>
    <property type="chains" value="2=1-37"/>
</dbReference>
<dbReference type="PDB" id="7PIP">
    <property type="method" value="EM"/>
    <property type="resolution" value="9.30 A"/>
    <property type="chains" value="2=1-37"/>
</dbReference>
<dbReference type="PDB" id="7PIQ">
    <property type="method" value="EM"/>
    <property type="resolution" value="9.70 A"/>
    <property type="chains" value="2=1-37"/>
</dbReference>
<dbReference type="PDB" id="7PIR">
    <property type="method" value="EM"/>
    <property type="resolution" value="12.10 A"/>
    <property type="chains" value="2=1-37"/>
</dbReference>
<dbReference type="PDB" id="7PIS">
    <property type="method" value="EM"/>
    <property type="resolution" value="15.00 A"/>
    <property type="chains" value="2=1-37"/>
</dbReference>
<dbReference type="PDB" id="7PIT">
    <property type="method" value="EM"/>
    <property type="resolution" value="5.70 A"/>
    <property type="chains" value="2=1-37"/>
</dbReference>
<dbReference type="PDB" id="8P7X">
    <property type="method" value="EM"/>
    <property type="resolution" value="3.03 A"/>
    <property type="chains" value="2=1-37"/>
</dbReference>
<dbReference type="PDB" id="8P7Y">
    <property type="method" value="EM"/>
    <property type="resolution" value="3.70 A"/>
    <property type="chains" value="2=1-37"/>
</dbReference>
<dbReference type="PDB" id="8P8B">
    <property type="method" value="EM"/>
    <property type="resolution" value="2.90 A"/>
    <property type="chains" value="2=1-37"/>
</dbReference>
<dbReference type="PDB" id="8P8V">
    <property type="method" value="EM"/>
    <property type="resolution" value="8.70 A"/>
    <property type="chains" value="2=1-37"/>
</dbReference>
<dbReference type="PDB" id="8P8W">
    <property type="method" value="EM"/>
    <property type="resolution" value="8.70 A"/>
    <property type="chains" value="2=1-37"/>
</dbReference>
<dbReference type="PDBsum" id="7OOD"/>
<dbReference type="PDBsum" id="7P6Z"/>
<dbReference type="PDBsum" id="7PAH"/>
<dbReference type="PDBsum" id="7PAI"/>
<dbReference type="PDBsum" id="7PAJ"/>
<dbReference type="PDBsum" id="7PAK"/>
<dbReference type="PDBsum" id="7PAL"/>
<dbReference type="PDBsum" id="7PAM"/>
<dbReference type="PDBsum" id="7PAN"/>
<dbReference type="PDBsum" id="7PAO"/>
<dbReference type="PDBsum" id="7PAQ"/>
<dbReference type="PDBsum" id="7PAR"/>
<dbReference type="PDBsum" id="7PAS"/>
<dbReference type="PDBsum" id="7PAT"/>
<dbReference type="PDBsum" id="7PAU"/>
<dbReference type="PDBsum" id="7PH9"/>
<dbReference type="PDBsum" id="7PHA"/>
<dbReference type="PDBsum" id="7PHB"/>
<dbReference type="PDBsum" id="7PHC"/>
<dbReference type="PDBsum" id="7PI8"/>
<dbReference type="PDBsum" id="7PI9"/>
<dbReference type="PDBsum" id="7PIA"/>
<dbReference type="PDBsum" id="7PIB"/>
<dbReference type="PDBsum" id="7PIC"/>
<dbReference type="PDBsum" id="7PIO"/>
<dbReference type="PDBsum" id="7PIP"/>
<dbReference type="PDBsum" id="7PIQ"/>
<dbReference type="PDBsum" id="7PIR"/>
<dbReference type="PDBsum" id="7PIS"/>
<dbReference type="PDBsum" id="7PIT"/>
<dbReference type="PDBsum" id="8P7X"/>
<dbReference type="PDBsum" id="8P7Y"/>
<dbReference type="PDBsum" id="8P8B"/>
<dbReference type="PDBsum" id="8P8V"/>
<dbReference type="PDBsum" id="8P8W"/>
<dbReference type="EMDB" id="EMD-13234"/>
<dbReference type="EMDB" id="EMD-13272"/>
<dbReference type="EMDB" id="EMD-13273"/>
<dbReference type="EMDB" id="EMD-13274"/>
<dbReference type="EMDB" id="EMD-13275"/>
<dbReference type="EMDB" id="EMD-13276"/>
<dbReference type="EMDB" id="EMD-13277"/>
<dbReference type="EMDB" id="EMD-13278"/>
<dbReference type="EMDB" id="EMD-13279"/>
<dbReference type="EMDB" id="EMD-13280"/>
<dbReference type="EMDB" id="EMD-13281"/>
<dbReference type="EMDB" id="EMD-13282"/>
<dbReference type="EMDB" id="EMD-13285"/>
<dbReference type="EMDB" id="EMD-13286"/>
<dbReference type="EMDB" id="EMD-13410"/>
<dbReference type="EMDB" id="EMD-13411"/>
<dbReference type="EMDB" id="EMD-13412"/>
<dbReference type="EMDB" id="EMD-13413"/>
<dbReference type="EMDB" id="EMD-13432"/>
<dbReference type="EMDB" id="EMD-13433"/>
<dbReference type="EMDB" id="EMD-13434"/>
<dbReference type="EMDB" id="EMD-13435"/>
<dbReference type="EMDB" id="EMD-13436"/>
<dbReference type="EMDB" id="EMD-13445"/>
<dbReference type="EMDB" id="EMD-13446"/>
<dbReference type="EMDB" id="EMD-13447"/>
<dbReference type="EMDB" id="EMD-13448"/>
<dbReference type="EMDB" id="EMD-13449"/>
<dbReference type="EMDB" id="EMD-13450"/>
<dbReference type="SMR" id="P52864"/>
<dbReference type="IntAct" id="P52864">
    <property type="interactions" value="1"/>
</dbReference>
<dbReference type="STRING" id="272634.MPN_188"/>
<dbReference type="EnsemblBacteria" id="AAB96291">
    <property type="protein sequence ID" value="AAB96291"/>
    <property type="gene ID" value="MPN_188"/>
</dbReference>
<dbReference type="GeneID" id="66609164"/>
<dbReference type="KEGG" id="mpn:MPN_188"/>
<dbReference type="PATRIC" id="fig|272634.6.peg.206"/>
<dbReference type="HOGENOM" id="CLU_135723_6_2_14"/>
<dbReference type="OrthoDB" id="9802520at2"/>
<dbReference type="BioCyc" id="MPNE272634:G1GJ3-303-MONOMER"/>
<dbReference type="Proteomes" id="UP000000808">
    <property type="component" value="Chromosome"/>
</dbReference>
<dbReference type="GO" id="GO:0005737">
    <property type="term" value="C:cytoplasm"/>
    <property type="evidence" value="ECO:0007669"/>
    <property type="project" value="UniProtKB-ARBA"/>
</dbReference>
<dbReference type="GO" id="GO:1990904">
    <property type="term" value="C:ribonucleoprotein complex"/>
    <property type="evidence" value="ECO:0007669"/>
    <property type="project" value="UniProtKB-KW"/>
</dbReference>
<dbReference type="GO" id="GO:0005840">
    <property type="term" value="C:ribosome"/>
    <property type="evidence" value="ECO:0007669"/>
    <property type="project" value="UniProtKB-KW"/>
</dbReference>
<dbReference type="GO" id="GO:0003735">
    <property type="term" value="F:structural constituent of ribosome"/>
    <property type="evidence" value="ECO:0007669"/>
    <property type="project" value="InterPro"/>
</dbReference>
<dbReference type="GO" id="GO:0006412">
    <property type="term" value="P:translation"/>
    <property type="evidence" value="ECO:0007669"/>
    <property type="project" value="UniProtKB-UniRule"/>
</dbReference>
<dbReference type="HAMAP" id="MF_00251">
    <property type="entry name" value="Ribosomal_bL36"/>
    <property type="match status" value="1"/>
</dbReference>
<dbReference type="InterPro" id="IPR000473">
    <property type="entry name" value="Ribosomal_bL36"/>
</dbReference>
<dbReference type="InterPro" id="IPR035977">
    <property type="entry name" value="Ribosomal_bL36_sp"/>
</dbReference>
<dbReference type="NCBIfam" id="TIGR01022">
    <property type="entry name" value="rpmJ_bact"/>
    <property type="match status" value="1"/>
</dbReference>
<dbReference type="PANTHER" id="PTHR42888">
    <property type="entry name" value="50S RIBOSOMAL PROTEIN L36, CHLOROPLASTIC"/>
    <property type="match status" value="1"/>
</dbReference>
<dbReference type="PANTHER" id="PTHR42888:SF1">
    <property type="entry name" value="LARGE RIBOSOMAL SUBUNIT PROTEIN BL36C"/>
    <property type="match status" value="1"/>
</dbReference>
<dbReference type="Pfam" id="PF00444">
    <property type="entry name" value="Ribosomal_L36"/>
    <property type="match status" value="1"/>
</dbReference>
<dbReference type="SUPFAM" id="SSF57840">
    <property type="entry name" value="Ribosomal protein L36"/>
    <property type="match status" value="1"/>
</dbReference>
<dbReference type="PROSITE" id="PS00828">
    <property type="entry name" value="RIBOSOMAL_L36"/>
    <property type="match status" value="1"/>
</dbReference>
<keyword id="KW-0002">3D-structure</keyword>
<keyword id="KW-1185">Reference proteome</keyword>
<keyword id="KW-0687">Ribonucleoprotein</keyword>
<keyword id="KW-0689">Ribosomal protein</keyword>
<organism>
    <name type="scientific">Mycoplasma pneumoniae (strain ATCC 29342 / M129 / Subtype 1)</name>
    <name type="common">Mycoplasmoides pneumoniae</name>
    <dbReference type="NCBI Taxonomy" id="272634"/>
    <lineage>
        <taxon>Bacteria</taxon>
        <taxon>Bacillati</taxon>
        <taxon>Mycoplasmatota</taxon>
        <taxon>Mycoplasmoidales</taxon>
        <taxon>Mycoplasmoidaceae</taxon>
        <taxon>Mycoplasmoides</taxon>
    </lineage>
</organism>
<name>RL36_MYCPN</name>
<feature type="chain" id="PRO_0000126218" description="Large ribosomal subunit protein bL36">
    <location>
        <begin position="1"/>
        <end position="37"/>
    </location>
</feature>
<feature type="strand" evidence="3">
    <location>
        <begin position="10"/>
        <end position="13"/>
    </location>
</feature>
<feature type="strand" evidence="3">
    <location>
        <begin position="15"/>
        <end position="19"/>
    </location>
</feature>
<feature type="strand" evidence="3">
    <location>
        <begin position="22"/>
        <end position="26"/>
    </location>
</feature>
<feature type="helix" evidence="3">
    <location>
        <begin position="30"/>
        <end position="32"/>
    </location>
</feature>
<accession>P52864</accession>
<proteinExistence type="evidence at protein level"/>
<protein>
    <recommendedName>
        <fullName evidence="1">Large ribosomal subunit protein bL36</fullName>
    </recommendedName>
    <alternativeName>
        <fullName evidence="2">50S ribosomal protein L36</fullName>
    </alternativeName>
</protein>
<sequence>MKVRASVKPICKDCKIIKRHQIVRVICKTQKHKQRQG</sequence>
<gene>
    <name evidence="1" type="primary">rpmJ</name>
    <name type="ordered locus">MPN_188</name>
    <name type="ORF">MP643</name>
</gene>
<comment type="similarity">
    <text evidence="1">Belongs to the bacterial ribosomal protein bL36 family.</text>
</comment>
<evidence type="ECO:0000255" key="1">
    <source>
        <dbReference type="HAMAP-Rule" id="MF_00251"/>
    </source>
</evidence>
<evidence type="ECO:0000305" key="2"/>
<evidence type="ECO:0007829" key="3">
    <source>
        <dbReference type="PDB" id="8P8B"/>
    </source>
</evidence>